<proteinExistence type="inferred from homology"/>
<name>SUB9_ARTBC</name>
<organism>
    <name type="scientific">Arthroderma benhamiae (strain ATCC MYA-4681 / CBS 112371)</name>
    <name type="common">Trichophyton mentagrophytes</name>
    <dbReference type="NCBI Taxonomy" id="663331"/>
    <lineage>
        <taxon>Eukaryota</taxon>
        <taxon>Fungi</taxon>
        <taxon>Dikarya</taxon>
        <taxon>Ascomycota</taxon>
        <taxon>Pezizomycotina</taxon>
        <taxon>Eurotiomycetes</taxon>
        <taxon>Eurotiomycetidae</taxon>
        <taxon>Onygenales</taxon>
        <taxon>Arthrodermataceae</taxon>
        <taxon>Trichophyton</taxon>
    </lineage>
</organism>
<gene>
    <name type="primary">SUB9</name>
    <name type="ORF">ARB_03790</name>
</gene>
<feature type="signal peptide" evidence="2">
    <location>
        <begin position="1"/>
        <end position="20"/>
    </location>
</feature>
<feature type="propeptide" id="PRO_0000406384" evidence="1">
    <location>
        <begin position="21"/>
        <end position="120"/>
    </location>
</feature>
<feature type="chain" id="PRO_0000406385" description="Subtilisin-like protease 9">
    <location>
        <begin position="121"/>
        <end position="402"/>
    </location>
</feature>
<feature type="domain" description="Inhibitor I9" evidence="2">
    <location>
        <begin position="36"/>
        <end position="119"/>
    </location>
</feature>
<feature type="domain" description="Peptidase S8" evidence="3">
    <location>
        <begin position="130"/>
        <end position="402"/>
    </location>
</feature>
<feature type="active site" description="Charge relay system" evidence="3">
    <location>
        <position position="162"/>
    </location>
</feature>
<feature type="active site" description="Charge relay system" evidence="3">
    <location>
        <position position="193"/>
    </location>
</feature>
<feature type="active site" description="Charge relay system" evidence="3">
    <location>
        <position position="348"/>
    </location>
</feature>
<feature type="glycosylation site" description="N-linked (GlcNAc...) asparagine" evidence="2">
    <location>
        <position position="254"/>
    </location>
</feature>
<feature type="glycosylation site" description="N-linked (GlcNAc...) asparagine" evidence="2">
    <location>
        <position position="390"/>
    </location>
</feature>
<feature type="glycosylation site" description="N-linked (GlcNAc...) asparagine" evidence="2">
    <location>
        <position position="398"/>
    </location>
</feature>
<accession>D4B5N1</accession>
<evidence type="ECO:0000250" key="1"/>
<evidence type="ECO:0000255" key="2"/>
<evidence type="ECO:0000255" key="3">
    <source>
        <dbReference type="PROSITE-ProRule" id="PRU01240"/>
    </source>
</evidence>
<evidence type="ECO:0000305" key="4"/>
<comment type="function">
    <text evidence="1">Secreted subtilisin-like serine protease with keratinolytic activity that contributes to pathogenicity.</text>
</comment>
<comment type="subcellular location">
    <subcellularLocation>
        <location evidence="1">Secreted</location>
    </subcellularLocation>
</comment>
<comment type="similarity">
    <text evidence="4">Belongs to the peptidase S8 family.</text>
</comment>
<dbReference type="EC" id="3.4.21.-"/>
<dbReference type="EMBL" id="ABSU01000045">
    <property type="protein sequence ID" value="EFE29359.1"/>
    <property type="molecule type" value="Genomic_DNA"/>
</dbReference>
<dbReference type="RefSeq" id="XP_003015507.1">
    <property type="nucleotide sequence ID" value="XM_003015461.1"/>
</dbReference>
<dbReference type="SMR" id="D4B5N1"/>
<dbReference type="GlyCosmos" id="D4B5N1">
    <property type="glycosylation" value="3 sites, No reported glycans"/>
</dbReference>
<dbReference type="GeneID" id="9525350"/>
<dbReference type="KEGG" id="abe:ARB_03790"/>
<dbReference type="eggNOG" id="KOG1153">
    <property type="taxonomic scope" value="Eukaryota"/>
</dbReference>
<dbReference type="HOGENOM" id="CLU_011263_1_3_1"/>
<dbReference type="OMA" id="DWITANH"/>
<dbReference type="OrthoDB" id="206201at2759"/>
<dbReference type="Proteomes" id="UP000008866">
    <property type="component" value="Unassembled WGS sequence"/>
</dbReference>
<dbReference type="GO" id="GO:0005576">
    <property type="term" value="C:extracellular region"/>
    <property type="evidence" value="ECO:0007669"/>
    <property type="project" value="UniProtKB-SubCell"/>
</dbReference>
<dbReference type="GO" id="GO:0004252">
    <property type="term" value="F:serine-type endopeptidase activity"/>
    <property type="evidence" value="ECO:0007669"/>
    <property type="project" value="InterPro"/>
</dbReference>
<dbReference type="GO" id="GO:0006508">
    <property type="term" value="P:proteolysis"/>
    <property type="evidence" value="ECO:0007669"/>
    <property type="project" value="UniProtKB-KW"/>
</dbReference>
<dbReference type="CDD" id="cd04077">
    <property type="entry name" value="Peptidases_S8_PCSK9_ProteinaseK_like"/>
    <property type="match status" value="1"/>
</dbReference>
<dbReference type="FunFam" id="3.40.50.200:FF:000014">
    <property type="entry name" value="Proteinase K"/>
    <property type="match status" value="1"/>
</dbReference>
<dbReference type="Gene3D" id="3.30.70.80">
    <property type="entry name" value="Peptidase S8 propeptide/proteinase inhibitor I9"/>
    <property type="match status" value="1"/>
</dbReference>
<dbReference type="Gene3D" id="3.40.50.200">
    <property type="entry name" value="Peptidase S8/S53 domain"/>
    <property type="match status" value="1"/>
</dbReference>
<dbReference type="InterPro" id="IPR034193">
    <property type="entry name" value="PCSK9_ProteinaseK-like"/>
</dbReference>
<dbReference type="InterPro" id="IPR000209">
    <property type="entry name" value="Peptidase_S8/S53_dom"/>
</dbReference>
<dbReference type="InterPro" id="IPR036852">
    <property type="entry name" value="Peptidase_S8/S53_dom_sf"/>
</dbReference>
<dbReference type="InterPro" id="IPR023828">
    <property type="entry name" value="Peptidase_S8_Ser-AS"/>
</dbReference>
<dbReference type="InterPro" id="IPR050131">
    <property type="entry name" value="Peptidase_S8_subtilisin-like"/>
</dbReference>
<dbReference type="InterPro" id="IPR015500">
    <property type="entry name" value="Peptidase_S8_subtilisin-rel"/>
</dbReference>
<dbReference type="InterPro" id="IPR010259">
    <property type="entry name" value="S8pro/Inhibitor_I9"/>
</dbReference>
<dbReference type="InterPro" id="IPR037045">
    <property type="entry name" value="S8pro/Inhibitor_I9_sf"/>
</dbReference>
<dbReference type="PANTHER" id="PTHR43806:SF58">
    <property type="entry name" value="ALKALINE PROTEASE 1-RELATED"/>
    <property type="match status" value="1"/>
</dbReference>
<dbReference type="PANTHER" id="PTHR43806">
    <property type="entry name" value="PEPTIDASE S8"/>
    <property type="match status" value="1"/>
</dbReference>
<dbReference type="Pfam" id="PF05922">
    <property type="entry name" value="Inhibitor_I9"/>
    <property type="match status" value="1"/>
</dbReference>
<dbReference type="Pfam" id="PF00082">
    <property type="entry name" value="Peptidase_S8"/>
    <property type="match status" value="1"/>
</dbReference>
<dbReference type="PRINTS" id="PR00723">
    <property type="entry name" value="SUBTILISIN"/>
</dbReference>
<dbReference type="SUPFAM" id="SSF54897">
    <property type="entry name" value="Protease propeptides/inhibitors"/>
    <property type="match status" value="1"/>
</dbReference>
<dbReference type="SUPFAM" id="SSF52743">
    <property type="entry name" value="Subtilisin-like"/>
    <property type="match status" value="1"/>
</dbReference>
<dbReference type="PROSITE" id="PS51892">
    <property type="entry name" value="SUBTILASE"/>
    <property type="match status" value="1"/>
</dbReference>
<dbReference type="PROSITE" id="PS00138">
    <property type="entry name" value="SUBTILASE_SER"/>
    <property type="match status" value="1"/>
</dbReference>
<reference key="1">
    <citation type="journal article" date="2011" name="Genome Biol.">
        <title>Comparative and functional genomics provide insights into the pathogenicity of dermatophytic fungi.</title>
        <authorList>
            <person name="Burmester A."/>
            <person name="Shelest E."/>
            <person name="Gloeckner G."/>
            <person name="Heddergott C."/>
            <person name="Schindler S."/>
            <person name="Staib P."/>
            <person name="Heidel A."/>
            <person name="Felder M."/>
            <person name="Petzold A."/>
            <person name="Szafranski K."/>
            <person name="Feuermann M."/>
            <person name="Pedruzzi I."/>
            <person name="Priebe S."/>
            <person name="Groth M."/>
            <person name="Winkler R."/>
            <person name="Li W."/>
            <person name="Kniemeyer O."/>
            <person name="Schroeckh V."/>
            <person name="Hertweck C."/>
            <person name="Hube B."/>
            <person name="White T.C."/>
            <person name="Platzer M."/>
            <person name="Guthke R."/>
            <person name="Heitman J."/>
            <person name="Woestemeyer J."/>
            <person name="Zipfel P.F."/>
            <person name="Monod M."/>
            <person name="Brakhage A.A."/>
        </authorList>
    </citation>
    <scope>NUCLEOTIDE SEQUENCE [LARGE SCALE GENOMIC DNA]</scope>
    <source>
        <strain>ATCC MYA-4681 / CBS 112371</strain>
    </source>
</reference>
<keyword id="KW-0325">Glycoprotein</keyword>
<keyword id="KW-0378">Hydrolase</keyword>
<keyword id="KW-0645">Protease</keyword>
<keyword id="KW-1185">Reference proteome</keyword>
<keyword id="KW-0964">Secreted</keyword>
<keyword id="KW-0720">Serine protease</keyword>
<keyword id="KW-0732">Signal</keyword>
<keyword id="KW-0843">Virulence</keyword>
<keyword id="KW-0865">Zymogen</keyword>
<sequence length="402" mass="42128">MGFFRQLFSLSLCALSLAIPSKLIGLENTQDVIPNSYIVVMKSTISEAEFQTHQAWASKIHRRNLGERDGTLGGLDGLKTTFEFEGLKGYSGAFDKRTIELISRNPAVDYVEVDRVVKLDAITTQRNAPSWGLGRISHKSAGSSDFVFDDSAGSGITIYGVDTGIDIKHPEFSGRATWGTNTVDNEDTDQNGHGTHTAGTFAGATYGIAKKANVIAVKVLNAQGTGSTSGVIQGIQWCTDHAGRNGLRGKAAMNLSLGIRGSTVFNRVAEAAQQSGIFLAVAAGNDGTDAAQFSPASARGVCTAAATNSQDAATSWSNYGSVVAVYGPGADIVSAYPNEDTATLSGTSMASPHVCGVGAYLMALEGIGPDKVCDRIKELAVESVTNQKPNTTRKLLYNGSGA</sequence>
<protein>
    <recommendedName>
        <fullName>Subtilisin-like protease 9</fullName>
        <ecNumber>3.4.21.-</ecNumber>
    </recommendedName>
</protein>